<feature type="initiator methionine" description="Removed" evidence="4">
    <location>
        <position position="1"/>
    </location>
</feature>
<feature type="chain" id="PRO_0000201035" description="2-dehydro-3-deoxy-phosphogluconate aldolase">
    <location>
        <begin position="2"/>
        <end position="226"/>
    </location>
</feature>
<feature type="active site" description="Proton acceptor" evidence="1">
    <location>
        <position position="57"/>
    </location>
</feature>
<feature type="active site" description="Schiff-base intermediate with substrate" evidence="10 11 12">
    <location>
        <position position="145"/>
    </location>
</feature>
<feature type="binding site" evidence="1">
    <location>
        <position position="61"/>
    </location>
    <ligand>
        <name>pyruvate</name>
        <dbReference type="ChEBI" id="CHEBI:15361"/>
    </ligand>
</feature>
<feature type="binding site" evidence="1">
    <location>
        <position position="85"/>
    </location>
    <ligand>
        <name>pyruvate</name>
        <dbReference type="ChEBI" id="CHEBI:15361"/>
    </ligand>
</feature>
<feature type="binding site" description="covalent" evidence="1">
    <location>
        <position position="145"/>
    </location>
    <ligand>
        <name>pyruvate</name>
        <dbReference type="ChEBI" id="CHEBI:15361"/>
    </ligand>
</feature>
<feature type="site" description="Plays a major role in determining the stereoselectivity" evidence="1">
    <location>
        <position position="173"/>
    </location>
</feature>
<feature type="sequence conflict" description="In Ref. 1; CAC14910." evidence="9" ref="1">
    <original>E</original>
    <variation>Q</variation>
    <location>
        <position position="110"/>
    </location>
</feature>
<feature type="sequence conflict" description="In Ref. 1; CAC14910." evidence="9" ref="1">
    <original>TG</original>
    <variation>GT</variation>
    <location>
        <begin position="195"/>
        <end position="196"/>
    </location>
</feature>
<feature type="sequence conflict" description="In Ref. 1; CAC14910." evidence="9" ref="1">
    <original>I</original>
    <variation>M</variation>
    <location>
        <position position="220"/>
    </location>
</feature>
<feature type="helix" evidence="14">
    <location>
        <begin position="13"/>
        <end position="27"/>
    </location>
</feature>
<feature type="strand" evidence="14">
    <location>
        <begin position="28"/>
        <end position="33"/>
    </location>
</feature>
<feature type="helix" evidence="14">
    <location>
        <begin position="38"/>
        <end position="40"/>
    </location>
</feature>
<feature type="helix" evidence="14">
    <location>
        <begin position="41"/>
        <end position="50"/>
    </location>
</feature>
<feature type="strand" evidence="14">
    <location>
        <begin position="55"/>
        <end position="62"/>
    </location>
</feature>
<feature type="helix" evidence="14">
    <location>
        <begin position="65"/>
        <end position="75"/>
    </location>
</feature>
<feature type="strand" evidence="14">
    <location>
        <begin position="79"/>
        <end position="84"/>
    </location>
</feature>
<feature type="helix" evidence="14">
    <location>
        <begin position="89"/>
        <end position="98"/>
    </location>
</feature>
<feature type="strand" evidence="14">
    <location>
        <begin position="101"/>
        <end position="104"/>
    </location>
</feature>
<feature type="helix" evidence="14">
    <location>
        <begin position="110"/>
        <end position="118"/>
    </location>
</feature>
<feature type="helix" evidence="14">
    <location>
        <begin position="130"/>
        <end position="137"/>
    </location>
</feature>
<feature type="turn" evidence="14">
    <location>
        <begin position="138"/>
        <end position="140"/>
    </location>
</feature>
<feature type="strand" evidence="14">
    <location>
        <begin position="143"/>
        <end position="146"/>
    </location>
</feature>
<feature type="helix" evidence="14">
    <location>
        <begin position="149"/>
        <end position="152"/>
    </location>
</feature>
<feature type="helix" evidence="14">
    <location>
        <begin position="154"/>
        <end position="162"/>
    </location>
</feature>
<feature type="turn" evidence="14">
    <location>
        <begin position="163"/>
        <end position="167"/>
    </location>
</feature>
<feature type="strand" evidence="14">
    <location>
        <begin position="169"/>
        <end position="175"/>
    </location>
</feature>
<feature type="turn" evidence="14">
    <location>
        <begin position="178"/>
        <end position="180"/>
    </location>
</feature>
<feature type="helix" evidence="14">
    <location>
        <begin position="181"/>
        <end position="186"/>
    </location>
</feature>
<feature type="strand" evidence="14">
    <location>
        <begin position="193"/>
        <end position="195"/>
    </location>
</feature>
<feature type="helix" evidence="14">
    <location>
        <begin position="201"/>
        <end position="205"/>
    </location>
</feature>
<feature type="helix" evidence="14">
    <location>
        <begin position="209"/>
        <end position="221"/>
    </location>
</feature>
<evidence type="ECO:0000250" key="1">
    <source>
        <dbReference type="UniProtKB" id="P0A955"/>
    </source>
</evidence>
<evidence type="ECO:0000250" key="2">
    <source>
        <dbReference type="UniProtKB" id="Q15X88"/>
    </source>
</evidence>
<evidence type="ECO:0000269" key="3">
    <source>
    </source>
</evidence>
<evidence type="ECO:0000269" key="4">
    <source>
    </source>
</evidence>
<evidence type="ECO:0000269" key="5">
    <source>
    </source>
</evidence>
<evidence type="ECO:0000269" key="6">
    <source>
    </source>
</evidence>
<evidence type="ECO:0000303" key="7">
    <source>
    </source>
</evidence>
<evidence type="ECO:0000303" key="8">
    <source>
    </source>
</evidence>
<evidence type="ECO:0000305" key="9"/>
<evidence type="ECO:0000305" key="10">
    <source>
    </source>
</evidence>
<evidence type="ECO:0000305" key="11">
    <source>
    </source>
</evidence>
<evidence type="ECO:0000305" key="12">
    <source>
    </source>
</evidence>
<evidence type="ECO:0007744" key="13">
    <source>
        <dbReference type="PDB" id="1MXS"/>
    </source>
</evidence>
<evidence type="ECO:0007829" key="14">
    <source>
        <dbReference type="PDB" id="1MXS"/>
    </source>
</evidence>
<protein>
    <recommendedName>
        <fullName evidence="9">2-dehydro-3-deoxy-phosphogluconate aldolase</fullName>
        <ecNumber evidence="2">4.1.2.14</ecNumber>
    </recommendedName>
    <alternativeName>
        <fullName evidence="8">2-keto-3-deoxy-6-phosphogluconate aldolase</fullName>
        <shortName evidence="8">KDPG aldolase</shortName>
    </alternativeName>
    <alternativeName>
        <fullName>Phospho-2-dehydro-3-deoxygluconate aldolase</fullName>
    </alternativeName>
    <alternativeName>
        <fullName>Phospho-2-keto-3-deoxygluconate aldolase</fullName>
    </alternativeName>
</protein>
<reference key="1">
    <citation type="journal article" date="2002" name="FEMS Microbiol. Lett.">
        <title>Analysis of the zwf-pgl-eda-operon in Pseudomonas putida strains H and KT2440.</title>
        <authorList>
            <person name="Petruschka L."/>
            <person name="Adolf K."/>
            <person name="Burchhardt G."/>
            <person name="Dernedde J."/>
            <person name="Jurgensen J."/>
            <person name="Herrmann H."/>
        </authorList>
    </citation>
    <scope>NUCLEOTIDE SEQUENCE [GENOMIC DNA]</scope>
    <source>
        <strain>H</strain>
    </source>
</reference>
<reference key="2">
    <citation type="journal article" date="1980" name="J. Biol. Chem.">
        <title>Complete primary structure of 2-keto-3-deoxy-6-phosphogluconate aldolase.</title>
        <authorList>
            <person name="Suzuki N."/>
            <person name="Wood W.A."/>
        </authorList>
    </citation>
    <scope>PROTEIN SEQUENCE OF 2-226</scope>
    <scope>ACTIVE SITE</scope>
</reference>
<reference key="3">
    <citation type="journal article" date="1976" name="Biochemistry">
        <title>The folding and quaternary structure of trimeric 2-keto-3-deoxy-6-phosphogluconic aldolase at 3.5-A resolution.</title>
        <authorList>
            <person name="Mavridis I.M."/>
            <person name="Tulinsky A."/>
        </authorList>
    </citation>
    <scope>X-RAY CRYSTALLOGRAPHY (3.5 ANGSTROMS)</scope>
    <scope>SUBUNIT</scope>
</reference>
<reference key="4">
    <citation type="journal article" date="1982" name="J. Mol. Biol.">
        <title>Structure of 2-keto-3-deoxy-6-phosphogluconate aldolase at 2.8-A resolution.</title>
        <authorList>
            <person name="Mavridis I.M."/>
            <person name="Hatada M.H."/>
            <person name="Tulinsky A."/>
            <person name="Lebioda L."/>
        </authorList>
    </citation>
    <scope>X-RAY CRYSTALLOGRAPHY (2.8 ANGSTROMS)</scope>
    <scope>SUBUNIT</scope>
    <scope>ACTIVE SITE</scope>
</reference>
<reference evidence="13" key="5">
    <citation type="journal article" date="2003" name="Acta Crystallogr. D">
        <title>Structure of 2-keto-3-deoxy-6-phosphogluconate (KDPG) aldolase from Pseudomonas putida.</title>
        <authorList>
            <person name="Bell B.J."/>
            <person name="Watanabe L."/>
            <person name="Rios-Steiner J.L."/>
            <person name="Tulinsky A."/>
            <person name="Lebioda L."/>
            <person name="Arni R.K."/>
        </authorList>
    </citation>
    <scope>X-RAY CRYSTALLOGRAPHY (2.20 ANGSTROMS) OF 2-226</scope>
    <scope>SUBUNIT</scope>
    <scope>ACTIVE SITE</scope>
</reference>
<organism>
    <name type="scientific">Pseudomonas putida</name>
    <name type="common">Arthrobacter siderocapsulatus</name>
    <dbReference type="NCBI Taxonomy" id="303"/>
    <lineage>
        <taxon>Bacteria</taxon>
        <taxon>Pseudomonadati</taxon>
        <taxon>Pseudomonadota</taxon>
        <taxon>Gammaproteobacteria</taxon>
        <taxon>Pseudomonadales</taxon>
        <taxon>Pseudomonadaceae</taxon>
        <taxon>Pseudomonas</taxon>
    </lineage>
</organism>
<name>ALKD_PSEPU</name>
<dbReference type="EC" id="4.1.2.14" evidence="2"/>
<dbReference type="EMBL" id="AJ279003">
    <property type="protein sequence ID" value="CAC14910.1"/>
    <property type="molecule type" value="Genomic_DNA"/>
</dbReference>
<dbReference type="PIR" id="A01105">
    <property type="entry name" value="ADPSGP"/>
</dbReference>
<dbReference type="PDB" id="1MXS">
    <property type="method" value="X-ray"/>
    <property type="resolution" value="2.20 A"/>
    <property type="chains" value="A=2-226"/>
</dbReference>
<dbReference type="PDBsum" id="1MXS"/>
<dbReference type="SMR" id="P00885"/>
<dbReference type="eggNOG" id="COG0800">
    <property type="taxonomic scope" value="Bacteria"/>
</dbReference>
<dbReference type="UniPathway" id="UPA00856">
    <property type="reaction ID" value="UER00829"/>
</dbReference>
<dbReference type="EvolutionaryTrace" id="P00885"/>
<dbReference type="GO" id="GO:0008675">
    <property type="term" value="F:2-dehydro-3-deoxy-phosphogluconate aldolase activity"/>
    <property type="evidence" value="ECO:0007669"/>
    <property type="project" value="UniProtKB-EC"/>
</dbReference>
<dbReference type="CDD" id="cd00452">
    <property type="entry name" value="KDPG_aldolase"/>
    <property type="match status" value="1"/>
</dbReference>
<dbReference type="Gene3D" id="3.20.20.70">
    <property type="entry name" value="Aldolase class I"/>
    <property type="match status" value="1"/>
</dbReference>
<dbReference type="InterPro" id="IPR000887">
    <property type="entry name" value="Aldlse_KDPG_KHG"/>
</dbReference>
<dbReference type="InterPro" id="IPR013785">
    <property type="entry name" value="Aldolase_TIM"/>
</dbReference>
<dbReference type="InterPro" id="IPR031337">
    <property type="entry name" value="KDPG/KHG_AS_1"/>
</dbReference>
<dbReference type="InterPro" id="IPR031338">
    <property type="entry name" value="KDPG/KHG_AS_2"/>
</dbReference>
<dbReference type="NCBIfam" id="TIGR01182">
    <property type="entry name" value="eda"/>
    <property type="match status" value="1"/>
</dbReference>
<dbReference type="NCBIfam" id="NF004325">
    <property type="entry name" value="PRK05718.1"/>
    <property type="match status" value="1"/>
</dbReference>
<dbReference type="PANTHER" id="PTHR30246:SF1">
    <property type="entry name" value="2-DEHYDRO-3-DEOXY-6-PHOSPHOGALACTONATE ALDOLASE-RELATED"/>
    <property type="match status" value="1"/>
</dbReference>
<dbReference type="PANTHER" id="PTHR30246">
    <property type="entry name" value="2-KETO-3-DEOXY-6-PHOSPHOGLUCONATE ALDOLASE"/>
    <property type="match status" value="1"/>
</dbReference>
<dbReference type="Pfam" id="PF01081">
    <property type="entry name" value="Aldolase"/>
    <property type="match status" value="1"/>
</dbReference>
<dbReference type="SUPFAM" id="SSF51569">
    <property type="entry name" value="Aldolase"/>
    <property type="match status" value="1"/>
</dbReference>
<dbReference type="PROSITE" id="PS00159">
    <property type="entry name" value="ALDOLASE_KDPG_KHG_1"/>
    <property type="match status" value="1"/>
</dbReference>
<dbReference type="PROSITE" id="PS00160">
    <property type="entry name" value="ALDOLASE_KDPG_KHG_2"/>
    <property type="match status" value="1"/>
</dbReference>
<comment type="function">
    <text evidence="1">Involved in the degradation of glucose via the Entner-Doudoroff pathway (By similarity). Catalyzes the reversible, stereospecific retro-aldol cleavage of 2-keto-3-deoxy-6-phosphogluconate (KDPG) to pyruvate and D-glyceraldehyde-3-phosphate (By similarity).</text>
</comment>
<comment type="catalytic activity">
    <reaction evidence="1">
        <text>2-dehydro-3-deoxy-6-phospho-D-gluconate = D-glyceraldehyde 3-phosphate + pyruvate</text>
        <dbReference type="Rhea" id="RHEA:17089"/>
        <dbReference type="ChEBI" id="CHEBI:15361"/>
        <dbReference type="ChEBI" id="CHEBI:57569"/>
        <dbReference type="ChEBI" id="CHEBI:59776"/>
        <dbReference type="EC" id="4.1.2.14"/>
    </reaction>
</comment>
<comment type="pathway">
    <text evidence="1">Carbohydrate acid metabolism; 2-dehydro-3-deoxy-D-gluconate degradation; D-glyceraldehyde 3-phosphate and pyruvate from 2-dehydro-3-deoxy-D-gluconate: step 2/2.</text>
</comment>
<comment type="subunit">
    <text evidence="3 5 6">Homotrimer.</text>
</comment>
<comment type="similarity">
    <text evidence="9">Belongs to the KHG/KDPG aldolase family.</text>
</comment>
<sequence>MTTLERPQPKLSMADKAARIDAICEKARILPVITIAREEDILPLADALAAGGIRTLEVTLRSQHGLKAIQVLREQRPELCVGAGTVLDRSMFAAVEAAGAQFVVTPGITEDILEAGVDSEIPLLPGISTPSEIMMGYALGYRRFKLFPAEISGGVAAIKAFGGPFGDIRFCPTGGVNPANVRNYMALPNVMCVGTGWMLDSSWIKNGDWARIEACSAEAIALLDAN</sequence>
<keyword id="KW-0002">3D-structure</keyword>
<keyword id="KW-0119">Carbohydrate metabolism</keyword>
<keyword id="KW-0903">Direct protein sequencing</keyword>
<keyword id="KW-0456">Lyase</keyword>
<keyword id="KW-0704">Schiff base</keyword>
<accession>P00885</accession>
<accession>Q9EV78</accession>
<gene>
    <name evidence="7" type="primary">eda</name>
</gene>
<proteinExistence type="evidence at protein level"/>